<protein>
    <recommendedName>
        <fullName evidence="1">Small ribosomal subunit protein uS10</fullName>
    </recommendedName>
    <alternativeName>
        <fullName evidence="3">30S ribosomal protein S10</fullName>
    </alternativeName>
</protein>
<comment type="function">
    <text evidence="1">Involved in the binding of tRNA to the ribosomes.</text>
</comment>
<comment type="subunit">
    <text evidence="1">Part of the 30S ribosomal subunit.</text>
</comment>
<comment type="similarity">
    <text evidence="1">Belongs to the universal ribosomal protein uS10 family.</text>
</comment>
<gene>
    <name evidence="1" type="primary">rpsJ</name>
    <name evidence="1" type="synonym">rps10</name>
    <name type="ordered locus">MYCGA0500</name>
    <name type="ORF">MGA_0705</name>
</gene>
<name>RS10_MYCGA</name>
<organism>
    <name type="scientific">Mycoplasmoides gallisepticum (strain R(low / passage 15 / clone 2))</name>
    <name type="common">Mycoplasma gallisepticum</name>
    <dbReference type="NCBI Taxonomy" id="710127"/>
    <lineage>
        <taxon>Bacteria</taxon>
        <taxon>Bacillati</taxon>
        <taxon>Mycoplasmatota</taxon>
        <taxon>Mycoplasmoidales</taxon>
        <taxon>Mycoplasmoidaceae</taxon>
        <taxon>Mycoplasmoides</taxon>
    </lineage>
</organism>
<sequence>MTEQKAKSSKTSSEEAKKQKELTEIKIKLKSYDSRLLDQSVKKIFEIVKETGSKFCGPIPLPTKKEVFTIIRSPHVDKASREQFERRTHKRLIIIKNLKNETIQKLKRFVIPSGVELRIYL</sequence>
<proteinExistence type="inferred from homology"/>
<evidence type="ECO:0000255" key="1">
    <source>
        <dbReference type="HAMAP-Rule" id="MF_00508"/>
    </source>
</evidence>
<evidence type="ECO:0000256" key="2">
    <source>
        <dbReference type="SAM" id="MobiDB-lite"/>
    </source>
</evidence>
<evidence type="ECO:0000305" key="3"/>
<feature type="chain" id="PRO_0000146551" description="Small ribosomal subunit protein uS10">
    <location>
        <begin position="1"/>
        <end position="121"/>
    </location>
</feature>
<feature type="region of interest" description="Disordered" evidence="2">
    <location>
        <begin position="1"/>
        <end position="20"/>
    </location>
</feature>
<feature type="sequence conflict" description="In Ref. 1; AAB95386." evidence="3" ref="1">
    <original>G</original>
    <variation>C</variation>
    <location>
        <position position="114"/>
    </location>
</feature>
<dbReference type="EMBL" id="AF036708">
    <property type="protein sequence ID" value="AAB95386.1"/>
    <property type="molecule type" value="Genomic_DNA"/>
</dbReference>
<dbReference type="EMBL" id="AE015450">
    <property type="protein sequence ID" value="AAP56400.2"/>
    <property type="molecule type" value="Genomic_DNA"/>
</dbReference>
<dbReference type="RefSeq" id="WP_011113279.1">
    <property type="nucleotide sequence ID" value="NC_004829.2"/>
</dbReference>
<dbReference type="SMR" id="O52331"/>
<dbReference type="GeneID" id="93509868"/>
<dbReference type="KEGG" id="mga:MGA_0705"/>
<dbReference type="PATRIC" id="fig|233150.7.peg.54"/>
<dbReference type="HOGENOM" id="CLU_122625_1_2_14"/>
<dbReference type="OrthoDB" id="9804464at2"/>
<dbReference type="Proteomes" id="UP000001418">
    <property type="component" value="Chromosome"/>
</dbReference>
<dbReference type="GO" id="GO:1990904">
    <property type="term" value="C:ribonucleoprotein complex"/>
    <property type="evidence" value="ECO:0007669"/>
    <property type="project" value="UniProtKB-KW"/>
</dbReference>
<dbReference type="GO" id="GO:0005840">
    <property type="term" value="C:ribosome"/>
    <property type="evidence" value="ECO:0007669"/>
    <property type="project" value="UniProtKB-KW"/>
</dbReference>
<dbReference type="GO" id="GO:0003735">
    <property type="term" value="F:structural constituent of ribosome"/>
    <property type="evidence" value="ECO:0007669"/>
    <property type="project" value="InterPro"/>
</dbReference>
<dbReference type="GO" id="GO:0000049">
    <property type="term" value="F:tRNA binding"/>
    <property type="evidence" value="ECO:0007669"/>
    <property type="project" value="UniProtKB-UniRule"/>
</dbReference>
<dbReference type="GO" id="GO:0006412">
    <property type="term" value="P:translation"/>
    <property type="evidence" value="ECO:0007669"/>
    <property type="project" value="UniProtKB-UniRule"/>
</dbReference>
<dbReference type="FunFam" id="3.30.70.600:FF:000003">
    <property type="entry name" value="30S ribosomal protein S10"/>
    <property type="match status" value="1"/>
</dbReference>
<dbReference type="Gene3D" id="3.30.70.600">
    <property type="entry name" value="Ribosomal protein S10 domain"/>
    <property type="match status" value="1"/>
</dbReference>
<dbReference type="HAMAP" id="MF_00508">
    <property type="entry name" value="Ribosomal_uS10"/>
    <property type="match status" value="1"/>
</dbReference>
<dbReference type="InterPro" id="IPR001848">
    <property type="entry name" value="Ribosomal_uS10"/>
</dbReference>
<dbReference type="InterPro" id="IPR018268">
    <property type="entry name" value="Ribosomal_uS10_CS"/>
</dbReference>
<dbReference type="InterPro" id="IPR027486">
    <property type="entry name" value="Ribosomal_uS10_dom"/>
</dbReference>
<dbReference type="InterPro" id="IPR036838">
    <property type="entry name" value="Ribosomal_uS10_dom_sf"/>
</dbReference>
<dbReference type="NCBIfam" id="NF001861">
    <property type="entry name" value="PRK00596.1"/>
    <property type="match status" value="1"/>
</dbReference>
<dbReference type="NCBIfam" id="TIGR01049">
    <property type="entry name" value="rpsJ_bact"/>
    <property type="match status" value="1"/>
</dbReference>
<dbReference type="PANTHER" id="PTHR11700">
    <property type="entry name" value="30S RIBOSOMAL PROTEIN S10 FAMILY MEMBER"/>
    <property type="match status" value="1"/>
</dbReference>
<dbReference type="Pfam" id="PF00338">
    <property type="entry name" value="Ribosomal_S10"/>
    <property type="match status" value="1"/>
</dbReference>
<dbReference type="PRINTS" id="PR00971">
    <property type="entry name" value="RIBOSOMALS10"/>
</dbReference>
<dbReference type="SMART" id="SM01403">
    <property type="entry name" value="Ribosomal_S10"/>
    <property type="match status" value="1"/>
</dbReference>
<dbReference type="SUPFAM" id="SSF54999">
    <property type="entry name" value="Ribosomal protein S10"/>
    <property type="match status" value="1"/>
</dbReference>
<dbReference type="PROSITE" id="PS00361">
    <property type="entry name" value="RIBOSOMAL_S10"/>
    <property type="match status" value="1"/>
</dbReference>
<accession>O52331</accession>
<reference key="1">
    <citation type="journal article" date="2000" name="Mol. Biol. (Mosk.)">
        <title>Determination and analysis of the nucleotide sequence of a segment of a Mycoplasma gallisepticum strain A5969 chromosome, containing operons S10 and rrn23-5.</title>
        <authorList>
            <person name="Skamrov A.V."/>
            <person name="Gol'dman M.A."/>
            <person name="Feoktistova E.S."/>
            <person name="Bibilashvili R.S."/>
        </authorList>
    </citation>
    <scope>NUCLEOTIDE SEQUENCE [GENOMIC DNA]</scope>
    <source>
        <strain>A5969Var.B</strain>
    </source>
</reference>
<reference key="2">
    <citation type="journal article" date="2003" name="Microbiology">
        <title>The complete genome sequence of the avian pathogen Mycoplasma gallisepticum strain R(low).</title>
        <authorList>
            <person name="Papazisi L."/>
            <person name="Gorton T.S."/>
            <person name="Kutish G."/>
            <person name="Markham P.F."/>
            <person name="Browning G.F."/>
            <person name="Nguyen D.K."/>
            <person name="Swartzell S."/>
            <person name="Madan A."/>
            <person name="Mahairas G."/>
            <person name="Geary S.J."/>
        </authorList>
    </citation>
    <scope>NUCLEOTIDE SEQUENCE [LARGE SCALE GENOMIC DNA]</scope>
    <source>
        <strain>R(low / passage 15 / clone 2)</strain>
    </source>
</reference>
<keyword id="KW-1185">Reference proteome</keyword>
<keyword id="KW-0687">Ribonucleoprotein</keyword>
<keyword id="KW-0689">Ribosomal protein</keyword>